<gene>
    <name evidence="1" type="primary">rpmE</name>
    <name type="ordered locus">Noc_0243</name>
</gene>
<proteinExistence type="inferred from homology"/>
<sequence length="68" mass="7761">MRQDIHPKYSEITVTCSCGNSFSTRSTAGKDFHIEVCSACHPFYTGKQKLLDTAGRVDKFRQRYNLKS</sequence>
<evidence type="ECO:0000255" key="1">
    <source>
        <dbReference type="HAMAP-Rule" id="MF_00501"/>
    </source>
</evidence>
<evidence type="ECO:0000305" key="2"/>
<reference key="1">
    <citation type="journal article" date="2006" name="Appl. Environ. Microbiol.">
        <title>Complete genome sequence of the marine, chemolithoautotrophic, ammonia-oxidizing bacterium Nitrosococcus oceani ATCC 19707.</title>
        <authorList>
            <person name="Klotz M.G."/>
            <person name="Arp D.J."/>
            <person name="Chain P.S.G."/>
            <person name="El-Sheikh A.F."/>
            <person name="Hauser L.J."/>
            <person name="Hommes N.G."/>
            <person name="Larimer F.W."/>
            <person name="Malfatti S.A."/>
            <person name="Norton J.M."/>
            <person name="Poret-Peterson A.T."/>
            <person name="Vergez L.M."/>
            <person name="Ward B.B."/>
        </authorList>
    </citation>
    <scope>NUCLEOTIDE SEQUENCE [LARGE SCALE GENOMIC DNA]</scope>
    <source>
        <strain>ATCC 19707 / BCRC 17464 / JCM 30415 / NCIMB 11848 / C-107</strain>
    </source>
</reference>
<keyword id="KW-0479">Metal-binding</keyword>
<keyword id="KW-1185">Reference proteome</keyword>
<keyword id="KW-0687">Ribonucleoprotein</keyword>
<keyword id="KW-0689">Ribosomal protein</keyword>
<keyword id="KW-0694">RNA-binding</keyword>
<keyword id="KW-0699">rRNA-binding</keyword>
<keyword id="KW-0862">Zinc</keyword>
<dbReference type="EMBL" id="CP000127">
    <property type="protein sequence ID" value="ABA56773.1"/>
    <property type="molecule type" value="Genomic_DNA"/>
</dbReference>
<dbReference type="SMR" id="Q3JEH3"/>
<dbReference type="FunCoup" id="Q3JEH3">
    <property type="interactions" value="440"/>
</dbReference>
<dbReference type="STRING" id="323261.Noc_0243"/>
<dbReference type="KEGG" id="noc:Noc_0243"/>
<dbReference type="eggNOG" id="COG0254">
    <property type="taxonomic scope" value="Bacteria"/>
</dbReference>
<dbReference type="HOGENOM" id="CLU_114306_4_0_6"/>
<dbReference type="InParanoid" id="Q3JEH3"/>
<dbReference type="Proteomes" id="UP000006838">
    <property type="component" value="Chromosome"/>
</dbReference>
<dbReference type="GO" id="GO:1990904">
    <property type="term" value="C:ribonucleoprotein complex"/>
    <property type="evidence" value="ECO:0007669"/>
    <property type="project" value="UniProtKB-KW"/>
</dbReference>
<dbReference type="GO" id="GO:0005840">
    <property type="term" value="C:ribosome"/>
    <property type="evidence" value="ECO:0007669"/>
    <property type="project" value="UniProtKB-KW"/>
</dbReference>
<dbReference type="GO" id="GO:0046872">
    <property type="term" value="F:metal ion binding"/>
    <property type="evidence" value="ECO:0007669"/>
    <property type="project" value="UniProtKB-KW"/>
</dbReference>
<dbReference type="GO" id="GO:0019843">
    <property type="term" value="F:rRNA binding"/>
    <property type="evidence" value="ECO:0007669"/>
    <property type="project" value="UniProtKB-KW"/>
</dbReference>
<dbReference type="GO" id="GO:0003735">
    <property type="term" value="F:structural constituent of ribosome"/>
    <property type="evidence" value="ECO:0007669"/>
    <property type="project" value="InterPro"/>
</dbReference>
<dbReference type="GO" id="GO:0006412">
    <property type="term" value="P:translation"/>
    <property type="evidence" value="ECO:0007669"/>
    <property type="project" value="UniProtKB-UniRule"/>
</dbReference>
<dbReference type="Gene3D" id="4.10.830.30">
    <property type="entry name" value="Ribosomal protein L31"/>
    <property type="match status" value="1"/>
</dbReference>
<dbReference type="HAMAP" id="MF_00501">
    <property type="entry name" value="Ribosomal_bL31_1"/>
    <property type="match status" value="1"/>
</dbReference>
<dbReference type="InterPro" id="IPR034704">
    <property type="entry name" value="Ribosomal_bL28/bL31-like_sf"/>
</dbReference>
<dbReference type="InterPro" id="IPR002150">
    <property type="entry name" value="Ribosomal_bL31"/>
</dbReference>
<dbReference type="InterPro" id="IPR027491">
    <property type="entry name" value="Ribosomal_bL31_A"/>
</dbReference>
<dbReference type="InterPro" id="IPR042105">
    <property type="entry name" value="Ribosomal_bL31_sf"/>
</dbReference>
<dbReference type="NCBIfam" id="TIGR00105">
    <property type="entry name" value="L31"/>
    <property type="match status" value="1"/>
</dbReference>
<dbReference type="NCBIfam" id="NF000612">
    <property type="entry name" value="PRK00019.1"/>
    <property type="match status" value="1"/>
</dbReference>
<dbReference type="NCBIfam" id="NF001809">
    <property type="entry name" value="PRK00528.1"/>
    <property type="match status" value="1"/>
</dbReference>
<dbReference type="PANTHER" id="PTHR33280">
    <property type="entry name" value="50S RIBOSOMAL PROTEIN L31, CHLOROPLASTIC"/>
    <property type="match status" value="1"/>
</dbReference>
<dbReference type="PANTHER" id="PTHR33280:SF6">
    <property type="entry name" value="LARGE RIBOSOMAL SUBUNIT PROTEIN BL31A"/>
    <property type="match status" value="1"/>
</dbReference>
<dbReference type="Pfam" id="PF01197">
    <property type="entry name" value="Ribosomal_L31"/>
    <property type="match status" value="1"/>
</dbReference>
<dbReference type="PRINTS" id="PR01249">
    <property type="entry name" value="RIBOSOMALL31"/>
</dbReference>
<dbReference type="SUPFAM" id="SSF143800">
    <property type="entry name" value="L28p-like"/>
    <property type="match status" value="1"/>
</dbReference>
<dbReference type="PROSITE" id="PS01143">
    <property type="entry name" value="RIBOSOMAL_L31"/>
    <property type="match status" value="1"/>
</dbReference>
<feature type="chain" id="PRO_0000259201" description="Large ribosomal subunit protein bL31">
    <location>
        <begin position="1"/>
        <end position="68"/>
    </location>
</feature>
<feature type="binding site" evidence="1">
    <location>
        <position position="16"/>
    </location>
    <ligand>
        <name>Zn(2+)</name>
        <dbReference type="ChEBI" id="CHEBI:29105"/>
    </ligand>
</feature>
<feature type="binding site" evidence="1">
    <location>
        <position position="18"/>
    </location>
    <ligand>
        <name>Zn(2+)</name>
        <dbReference type="ChEBI" id="CHEBI:29105"/>
    </ligand>
</feature>
<feature type="binding site" evidence="1">
    <location>
        <position position="37"/>
    </location>
    <ligand>
        <name>Zn(2+)</name>
        <dbReference type="ChEBI" id="CHEBI:29105"/>
    </ligand>
</feature>
<feature type="binding site" evidence="1">
    <location>
        <position position="40"/>
    </location>
    <ligand>
        <name>Zn(2+)</name>
        <dbReference type="ChEBI" id="CHEBI:29105"/>
    </ligand>
</feature>
<comment type="function">
    <text evidence="1">Binds the 23S rRNA.</text>
</comment>
<comment type="cofactor">
    <cofactor evidence="1">
        <name>Zn(2+)</name>
        <dbReference type="ChEBI" id="CHEBI:29105"/>
    </cofactor>
    <text evidence="1">Binds 1 zinc ion per subunit.</text>
</comment>
<comment type="subunit">
    <text evidence="1">Part of the 50S ribosomal subunit.</text>
</comment>
<comment type="similarity">
    <text evidence="1">Belongs to the bacterial ribosomal protein bL31 family. Type A subfamily.</text>
</comment>
<protein>
    <recommendedName>
        <fullName evidence="1">Large ribosomal subunit protein bL31</fullName>
    </recommendedName>
    <alternativeName>
        <fullName evidence="2">50S ribosomal protein L31</fullName>
    </alternativeName>
</protein>
<accession>Q3JEH3</accession>
<name>RL31_NITOC</name>
<organism>
    <name type="scientific">Nitrosococcus oceani (strain ATCC 19707 / BCRC 17464 / JCM 30415 / NCIMB 11848 / C-107)</name>
    <dbReference type="NCBI Taxonomy" id="323261"/>
    <lineage>
        <taxon>Bacteria</taxon>
        <taxon>Pseudomonadati</taxon>
        <taxon>Pseudomonadota</taxon>
        <taxon>Gammaproteobacteria</taxon>
        <taxon>Chromatiales</taxon>
        <taxon>Chromatiaceae</taxon>
        <taxon>Nitrosococcus</taxon>
    </lineage>
</organism>